<name>SYD_XANE5</name>
<evidence type="ECO:0000255" key="1">
    <source>
        <dbReference type="HAMAP-Rule" id="MF_00044"/>
    </source>
</evidence>
<reference key="1">
    <citation type="journal article" date="2005" name="J. Bacteriol.">
        <title>Insights into genome plasticity and pathogenicity of the plant pathogenic Bacterium Xanthomonas campestris pv. vesicatoria revealed by the complete genome sequence.</title>
        <authorList>
            <person name="Thieme F."/>
            <person name="Koebnik R."/>
            <person name="Bekel T."/>
            <person name="Berger C."/>
            <person name="Boch J."/>
            <person name="Buettner D."/>
            <person name="Caldana C."/>
            <person name="Gaigalat L."/>
            <person name="Goesmann A."/>
            <person name="Kay S."/>
            <person name="Kirchner O."/>
            <person name="Lanz C."/>
            <person name="Linke B."/>
            <person name="McHardy A.C."/>
            <person name="Meyer F."/>
            <person name="Mittenhuber G."/>
            <person name="Nies D.H."/>
            <person name="Niesbach-Kloesgen U."/>
            <person name="Patschkowski T."/>
            <person name="Rueckert C."/>
            <person name="Rupp O."/>
            <person name="Schneiker S."/>
            <person name="Schuster S.C."/>
            <person name="Vorhoelter F.J."/>
            <person name="Weber E."/>
            <person name="Puehler A."/>
            <person name="Bonas U."/>
            <person name="Bartels D."/>
            <person name="Kaiser O."/>
        </authorList>
    </citation>
    <scope>NUCLEOTIDE SEQUENCE [LARGE SCALE GENOMIC DNA]</scope>
    <source>
        <strain>85-10</strain>
    </source>
</reference>
<sequence>MRTHFCGLVDETLIGQTVTLAGWTDVARNLGGVCFIDLRDHEGIVQVTVEPVAGDDASAELFKVAASLGYEDVLQVEGVVRARHAVNDKLRSGKVEVIATRISILNKAAPLPFHAHENPGEETRLKYRYLDLRRPEMQRMQRTRIKLVQALRRHLDARDFQDIETPILTKATPEGARDFLVPARMHPGEFYALPQSPQLFKQILMVAGFDRYYQIARCFRDEALRADRQLEFTQLDMEFAFVRERDVQDFVEDMIRAIFKEVVDVDLAAQFPRMTWAEAMRRYGSDKPDLRIALELVDVAELVKASQFPVFTAAADDADGRVAALLIPGGASLSRKQIDEYAAHAAKYGAKGLAYIKLSETGEVSSPIAKFFSEESFAALLKHVGASNGDIVFFGAGGYTKVSDFMGALRLKAGKDFNLVADGWAPLWVTDFPMFEWDDEAQRYVALHHPFTAPAVDDIADLRANARTAVSRGYDMVLNGNEIGGGSIRIHRPDMQSAVFELLGIGAEEARAKFGFLLDALNYGAPPHGGIAFGIDRIAALMAGTESIRDVIPFPKTTGAQDLMTDAPSPIAADQLAEVHVQVRPKQV</sequence>
<keyword id="KW-0030">Aminoacyl-tRNA synthetase</keyword>
<keyword id="KW-0067">ATP-binding</keyword>
<keyword id="KW-0963">Cytoplasm</keyword>
<keyword id="KW-0436">Ligase</keyword>
<keyword id="KW-0547">Nucleotide-binding</keyword>
<keyword id="KW-0648">Protein biosynthesis</keyword>
<proteinExistence type="inferred from homology"/>
<dbReference type="EC" id="6.1.1.12" evidence="1"/>
<dbReference type="EMBL" id="AM039952">
    <property type="protein sequence ID" value="CAJ25017.1"/>
    <property type="molecule type" value="Genomic_DNA"/>
</dbReference>
<dbReference type="RefSeq" id="WP_011348279.1">
    <property type="nucleotide sequence ID" value="NZ_CP017190.1"/>
</dbReference>
<dbReference type="SMR" id="Q3BQE6"/>
<dbReference type="STRING" id="456327.BJD11_06340"/>
<dbReference type="KEGG" id="xcv:XCV3286"/>
<dbReference type="eggNOG" id="COG0173">
    <property type="taxonomic scope" value="Bacteria"/>
</dbReference>
<dbReference type="HOGENOM" id="CLU_014330_3_2_6"/>
<dbReference type="Proteomes" id="UP000007069">
    <property type="component" value="Chromosome"/>
</dbReference>
<dbReference type="GO" id="GO:0005737">
    <property type="term" value="C:cytoplasm"/>
    <property type="evidence" value="ECO:0007669"/>
    <property type="project" value="UniProtKB-SubCell"/>
</dbReference>
<dbReference type="GO" id="GO:0004815">
    <property type="term" value="F:aspartate-tRNA ligase activity"/>
    <property type="evidence" value="ECO:0007669"/>
    <property type="project" value="UniProtKB-UniRule"/>
</dbReference>
<dbReference type="GO" id="GO:0005524">
    <property type="term" value="F:ATP binding"/>
    <property type="evidence" value="ECO:0007669"/>
    <property type="project" value="UniProtKB-UniRule"/>
</dbReference>
<dbReference type="GO" id="GO:0003676">
    <property type="term" value="F:nucleic acid binding"/>
    <property type="evidence" value="ECO:0007669"/>
    <property type="project" value="InterPro"/>
</dbReference>
<dbReference type="GO" id="GO:0006422">
    <property type="term" value="P:aspartyl-tRNA aminoacylation"/>
    <property type="evidence" value="ECO:0007669"/>
    <property type="project" value="UniProtKB-UniRule"/>
</dbReference>
<dbReference type="CDD" id="cd00777">
    <property type="entry name" value="AspRS_core"/>
    <property type="match status" value="1"/>
</dbReference>
<dbReference type="CDD" id="cd04317">
    <property type="entry name" value="EcAspRS_like_N"/>
    <property type="match status" value="1"/>
</dbReference>
<dbReference type="Gene3D" id="3.30.930.10">
    <property type="entry name" value="Bira Bifunctional Protein, Domain 2"/>
    <property type="match status" value="1"/>
</dbReference>
<dbReference type="Gene3D" id="3.30.1360.30">
    <property type="entry name" value="GAD-like domain"/>
    <property type="match status" value="1"/>
</dbReference>
<dbReference type="Gene3D" id="2.40.50.140">
    <property type="entry name" value="Nucleic acid-binding proteins"/>
    <property type="match status" value="1"/>
</dbReference>
<dbReference type="HAMAP" id="MF_00044">
    <property type="entry name" value="Asp_tRNA_synth_type1"/>
    <property type="match status" value="1"/>
</dbReference>
<dbReference type="InterPro" id="IPR004364">
    <property type="entry name" value="Aa-tRNA-synt_II"/>
</dbReference>
<dbReference type="InterPro" id="IPR006195">
    <property type="entry name" value="aa-tRNA-synth_II"/>
</dbReference>
<dbReference type="InterPro" id="IPR045864">
    <property type="entry name" value="aa-tRNA-synth_II/BPL/LPL"/>
</dbReference>
<dbReference type="InterPro" id="IPR004524">
    <property type="entry name" value="Asp-tRNA-ligase_1"/>
</dbReference>
<dbReference type="InterPro" id="IPR047089">
    <property type="entry name" value="Asp-tRNA-ligase_1_N"/>
</dbReference>
<dbReference type="InterPro" id="IPR002312">
    <property type="entry name" value="Asp/Asn-tRNA-synth_IIb"/>
</dbReference>
<dbReference type="InterPro" id="IPR047090">
    <property type="entry name" value="AspRS_core"/>
</dbReference>
<dbReference type="InterPro" id="IPR004115">
    <property type="entry name" value="GAD-like_sf"/>
</dbReference>
<dbReference type="InterPro" id="IPR029351">
    <property type="entry name" value="GAD_dom"/>
</dbReference>
<dbReference type="InterPro" id="IPR012340">
    <property type="entry name" value="NA-bd_OB-fold"/>
</dbReference>
<dbReference type="InterPro" id="IPR004365">
    <property type="entry name" value="NA-bd_OB_tRNA"/>
</dbReference>
<dbReference type="NCBIfam" id="TIGR00459">
    <property type="entry name" value="aspS_bact"/>
    <property type="match status" value="1"/>
</dbReference>
<dbReference type="NCBIfam" id="NF001750">
    <property type="entry name" value="PRK00476.1"/>
    <property type="match status" value="1"/>
</dbReference>
<dbReference type="PANTHER" id="PTHR22594:SF5">
    <property type="entry name" value="ASPARTATE--TRNA LIGASE, MITOCHONDRIAL"/>
    <property type="match status" value="1"/>
</dbReference>
<dbReference type="PANTHER" id="PTHR22594">
    <property type="entry name" value="ASPARTYL/LYSYL-TRNA SYNTHETASE"/>
    <property type="match status" value="1"/>
</dbReference>
<dbReference type="Pfam" id="PF02938">
    <property type="entry name" value="GAD"/>
    <property type="match status" value="1"/>
</dbReference>
<dbReference type="Pfam" id="PF00152">
    <property type="entry name" value="tRNA-synt_2"/>
    <property type="match status" value="1"/>
</dbReference>
<dbReference type="Pfam" id="PF01336">
    <property type="entry name" value="tRNA_anti-codon"/>
    <property type="match status" value="1"/>
</dbReference>
<dbReference type="PRINTS" id="PR01042">
    <property type="entry name" value="TRNASYNTHASP"/>
</dbReference>
<dbReference type="SUPFAM" id="SSF55681">
    <property type="entry name" value="Class II aaRS and biotin synthetases"/>
    <property type="match status" value="1"/>
</dbReference>
<dbReference type="SUPFAM" id="SSF55261">
    <property type="entry name" value="GAD domain-like"/>
    <property type="match status" value="1"/>
</dbReference>
<dbReference type="SUPFAM" id="SSF50249">
    <property type="entry name" value="Nucleic acid-binding proteins"/>
    <property type="match status" value="1"/>
</dbReference>
<dbReference type="PROSITE" id="PS50862">
    <property type="entry name" value="AA_TRNA_LIGASE_II"/>
    <property type="match status" value="1"/>
</dbReference>
<accession>Q3BQE6</accession>
<feature type="chain" id="PRO_0000235580" description="Aspartate--tRNA ligase">
    <location>
        <begin position="1"/>
        <end position="588"/>
    </location>
</feature>
<feature type="region of interest" description="Aspartate" evidence="1">
    <location>
        <begin position="198"/>
        <end position="201"/>
    </location>
</feature>
<feature type="binding site" evidence="1">
    <location>
        <position position="174"/>
    </location>
    <ligand>
        <name>L-aspartate</name>
        <dbReference type="ChEBI" id="CHEBI:29991"/>
    </ligand>
</feature>
<feature type="binding site" evidence="1">
    <location>
        <begin position="220"/>
        <end position="222"/>
    </location>
    <ligand>
        <name>ATP</name>
        <dbReference type="ChEBI" id="CHEBI:30616"/>
    </ligand>
</feature>
<feature type="binding site" evidence="1">
    <location>
        <position position="220"/>
    </location>
    <ligand>
        <name>L-aspartate</name>
        <dbReference type="ChEBI" id="CHEBI:29991"/>
    </ligand>
</feature>
<feature type="binding site" evidence="1">
    <location>
        <position position="229"/>
    </location>
    <ligand>
        <name>ATP</name>
        <dbReference type="ChEBI" id="CHEBI:30616"/>
    </ligand>
</feature>
<feature type="binding site" evidence="1">
    <location>
        <position position="448"/>
    </location>
    <ligand>
        <name>L-aspartate</name>
        <dbReference type="ChEBI" id="CHEBI:29991"/>
    </ligand>
</feature>
<feature type="binding site" evidence="1">
    <location>
        <position position="482"/>
    </location>
    <ligand>
        <name>ATP</name>
        <dbReference type="ChEBI" id="CHEBI:30616"/>
    </ligand>
</feature>
<feature type="binding site" evidence="1">
    <location>
        <position position="489"/>
    </location>
    <ligand>
        <name>L-aspartate</name>
        <dbReference type="ChEBI" id="CHEBI:29991"/>
    </ligand>
</feature>
<feature type="binding site" evidence="1">
    <location>
        <begin position="534"/>
        <end position="537"/>
    </location>
    <ligand>
        <name>ATP</name>
        <dbReference type="ChEBI" id="CHEBI:30616"/>
    </ligand>
</feature>
<organism>
    <name type="scientific">Xanthomonas euvesicatoria pv. vesicatoria (strain 85-10)</name>
    <name type="common">Xanthomonas campestris pv. vesicatoria</name>
    <dbReference type="NCBI Taxonomy" id="316273"/>
    <lineage>
        <taxon>Bacteria</taxon>
        <taxon>Pseudomonadati</taxon>
        <taxon>Pseudomonadota</taxon>
        <taxon>Gammaproteobacteria</taxon>
        <taxon>Lysobacterales</taxon>
        <taxon>Lysobacteraceae</taxon>
        <taxon>Xanthomonas</taxon>
    </lineage>
</organism>
<gene>
    <name evidence="1" type="primary">aspS</name>
    <name type="ordered locus">XCV3286</name>
</gene>
<protein>
    <recommendedName>
        <fullName evidence="1">Aspartate--tRNA ligase</fullName>
        <ecNumber evidence="1">6.1.1.12</ecNumber>
    </recommendedName>
    <alternativeName>
        <fullName evidence="1">Aspartyl-tRNA synthetase</fullName>
        <shortName evidence="1">AspRS</shortName>
    </alternativeName>
</protein>
<comment type="function">
    <text evidence="1">Catalyzes the attachment of L-aspartate to tRNA(Asp) in a two-step reaction: L-aspartate is first activated by ATP to form Asp-AMP and then transferred to the acceptor end of tRNA(Asp).</text>
</comment>
<comment type="catalytic activity">
    <reaction evidence="1">
        <text>tRNA(Asp) + L-aspartate + ATP = L-aspartyl-tRNA(Asp) + AMP + diphosphate</text>
        <dbReference type="Rhea" id="RHEA:19649"/>
        <dbReference type="Rhea" id="RHEA-COMP:9660"/>
        <dbReference type="Rhea" id="RHEA-COMP:9678"/>
        <dbReference type="ChEBI" id="CHEBI:29991"/>
        <dbReference type="ChEBI" id="CHEBI:30616"/>
        <dbReference type="ChEBI" id="CHEBI:33019"/>
        <dbReference type="ChEBI" id="CHEBI:78442"/>
        <dbReference type="ChEBI" id="CHEBI:78516"/>
        <dbReference type="ChEBI" id="CHEBI:456215"/>
        <dbReference type="EC" id="6.1.1.12"/>
    </reaction>
</comment>
<comment type="subunit">
    <text evidence="1">Homodimer.</text>
</comment>
<comment type="subcellular location">
    <subcellularLocation>
        <location evidence="1">Cytoplasm</location>
    </subcellularLocation>
</comment>
<comment type="similarity">
    <text evidence="1">Belongs to the class-II aminoacyl-tRNA synthetase family. Type 1 subfamily.</text>
</comment>